<evidence type="ECO:0000255" key="1">
    <source>
        <dbReference type="HAMAP-Rule" id="MF_01127"/>
    </source>
</evidence>
<evidence type="ECO:0000305" key="2"/>
<sequence>MEIRVFRQEDFEEVITLWERCDLLRPWNDPEMDIERKMNHDVSLFLVAEVNGEVVGTVMGGYDGHRGSAYYLGVHPEFRGRGIANALLNRLEKKLIARGCPKIQINVPEDNDMVLGMYERLGYEHADMLSLGKRLIEDEEY</sequence>
<reference key="1">
    <citation type="journal article" date="2005" name="Nucleic Acids Res.">
        <title>Genome dynamics and diversity of Shigella species, the etiologic agents of bacillary dysentery.</title>
        <authorList>
            <person name="Yang F."/>
            <person name="Yang J."/>
            <person name="Zhang X."/>
            <person name="Chen L."/>
            <person name="Jiang Y."/>
            <person name="Yan Y."/>
            <person name="Tang X."/>
            <person name="Wang J."/>
            <person name="Xiong Z."/>
            <person name="Dong J."/>
            <person name="Xue Y."/>
            <person name="Zhu Y."/>
            <person name="Xu X."/>
            <person name="Sun L."/>
            <person name="Chen S."/>
            <person name="Nie H."/>
            <person name="Peng J."/>
            <person name="Xu J."/>
            <person name="Wang Y."/>
            <person name="Yuan Z."/>
            <person name="Wen Y."/>
            <person name="Yao Z."/>
            <person name="Shen Y."/>
            <person name="Qiang B."/>
            <person name="Hou Y."/>
            <person name="Yu J."/>
            <person name="Jin Q."/>
        </authorList>
    </citation>
    <scope>NUCLEOTIDE SEQUENCE [LARGE SCALE GENOMIC DNA]</scope>
    <source>
        <strain>Sb227</strain>
    </source>
</reference>
<gene>
    <name evidence="1" type="primary">ypeA</name>
    <name type="ordered locus">SBO_2459</name>
</gene>
<proteinExistence type="inferred from homology"/>
<organism>
    <name type="scientific">Shigella boydii serotype 4 (strain Sb227)</name>
    <dbReference type="NCBI Taxonomy" id="300268"/>
    <lineage>
        <taxon>Bacteria</taxon>
        <taxon>Pseudomonadati</taxon>
        <taxon>Pseudomonadota</taxon>
        <taxon>Gammaproteobacteria</taxon>
        <taxon>Enterobacterales</taxon>
        <taxon>Enterobacteriaceae</taxon>
        <taxon>Shigella</taxon>
    </lineage>
</organism>
<name>YPEA_SHIBS</name>
<accession>Q31Y46</accession>
<comment type="similarity">
    <text evidence="1">Belongs to the acetyltransferase family. YpeA subfamily.</text>
</comment>
<comment type="sequence caution" evidence="2">
    <conflict type="erroneous initiation">
        <sequence resource="EMBL-CDS" id="ABB67012"/>
    </conflict>
</comment>
<protein>
    <recommendedName>
        <fullName evidence="1">Acetyltransferase YpeA</fullName>
        <ecNumber evidence="1">2.3.1.-</ecNumber>
    </recommendedName>
</protein>
<keyword id="KW-0012">Acyltransferase</keyword>
<keyword id="KW-0808">Transferase</keyword>
<dbReference type="EC" id="2.3.1.-" evidence="1"/>
<dbReference type="EMBL" id="CP000036">
    <property type="protein sequence ID" value="ABB67012.1"/>
    <property type="status" value="ALT_INIT"/>
    <property type="molecule type" value="Genomic_DNA"/>
</dbReference>
<dbReference type="RefSeq" id="WP_000405998.1">
    <property type="nucleotide sequence ID" value="NC_007613.1"/>
</dbReference>
<dbReference type="SMR" id="Q31Y46"/>
<dbReference type="KEGG" id="sbo:SBO_2459"/>
<dbReference type="HOGENOM" id="CLU_013985_34_1_6"/>
<dbReference type="Proteomes" id="UP000007067">
    <property type="component" value="Chromosome"/>
</dbReference>
<dbReference type="GO" id="GO:0016747">
    <property type="term" value="F:acyltransferase activity, transferring groups other than amino-acyl groups"/>
    <property type="evidence" value="ECO:0007669"/>
    <property type="project" value="UniProtKB-UniRule"/>
</dbReference>
<dbReference type="CDD" id="cd04301">
    <property type="entry name" value="NAT_SF"/>
    <property type="match status" value="1"/>
</dbReference>
<dbReference type="Gene3D" id="3.40.630.30">
    <property type="match status" value="1"/>
</dbReference>
<dbReference type="HAMAP" id="MF_01127">
    <property type="entry name" value="Acetyltransf_YpeA"/>
    <property type="match status" value="1"/>
</dbReference>
<dbReference type="InterPro" id="IPR023072">
    <property type="entry name" value="Acetyltransferase_YpeA"/>
</dbReference>
<dbReference type="InterPro" id="IPR016181">
    <property type="entry name" value="Acyl_CoA_acyltransferase"/>
</dbReference>
<dbReference type="InterPro" id="IPR050832">
    <property type="entry name" value="Bact_Acetyltransf"/>
</dbReference>
<dbReference type="InterPro" id="IPR000182">
    <property type="entry name" value="GNAT_dom"/>
</dbReference>
<dbReference type="NCBIfam" id="NF002959">
    <property type="entry name" value="PRK03624.1"/>
    <property type="match status" value="1"/>
</dbReference>
<dbReference type="PANTHER" id="PTHR43877">
    <property type="entry name" value="AMINOALKYLPHOSPHONATE N-ACETYLTRANSFERASE-RELATED-RELATED"/>
    <property type="match status" value="1"/>
</dbReference>
<dbReference type="Pfam" id="PF00583">
    <property type="entry name" value="Acetyltransf_1"/>
    <property type="match status" value="1"/>
</dbReference>
<dbReference type="SUPFAM" id="SSF55729">
    <property type="entry name" value="Acyl-CoA N-acyltransferases (Nat)"/>
    <property type="match status" value="1"/>
</dbReference>
<dbReference type="PROSITE" id="PS51186">
    <property type="entry name" value="GNAT"/>
    <property type="match status" value="1"/>
</dbReference>
<feature type="chain" id="PRO_0000298445" description="Acetyltransferase YpeA">
    <location>
        <begin position="1"/>
        <end position="141"/>
    </location>
</feature>
<feature type="domain" description="N-acetyltransferase" evidence="1">
    <location>
        <begin position="1"/>
        <end position="141"/>
    </location>
</feature>